<name>CYB5L_MIMIV</name>
<keyword id="KW-0249">Electron transport</keyword>
<keyword id="KW-0349">Heme</keyword>
<keyword id="KW-0408">Iron</keyword>
<keyword id="KW-0472">Membrane</keyword>
<keyword id="KW-0479">Metal-binding</keyword>
<keyword id="KW-1185">Reference proteome</keyword>
<keyword id="KW-0812">Transmembrane</keyword>
<keyword id="KW-1133">Transmembrane helix</keyword>
<keyword id="KW-0813">Transport</keyword>
<protein>
    <recommendedName>
        <fullName>Cytochrome b5-like protein</fullName>
    </recommendedName>
</protein>
<comment type="function">
    <text evidence="1">Membrane bound hemoprotein which function as an electron carrier for several membrane bound oxygenases.</text>
</comment>
<comment type="subcellular location">
    <subcellularLocation>
        <location evidence="4">Membrane</location>
        <topology evidence="4">Single-pass membrane protein</topology>
    </subcellularLocation>
</comment>
<comment type="similarity">
    <text evidence="4">Belongs to the cytochrome b5 family.</text>
</comment>
<dbReference type="EMBL" id="AY653733">
    <property type="protein sequence ID" value="AAV50889.1"/>
    <property type="molecule type" value="Genomic_DNA"/>
</dbReference>
<dbReference type="SMR" id="Q5UR80"/>
<dbReference type="KEGG" id="vg:9925270"/>
<dbReference type="Proteomes" id="UP000001134">
    <property type="component" value="Genome"/>
</dbReference>
<dbReference type="GO" id="GO:0016020">
    <property type="term" value="C:membrane"/>
    <property type="evidence" value="ECO:0007669"/>
    <property type="project" value="UniProtKB-SubCell"/>
</dbReference>
<dbReference type="GO" id="GO:0020037">
    <property type="term" value="F:heme binding"/>
    <property type="evidence" value="ECO:0007669"/>
    <property type="project" value="InterPro"/>
</dbReference>
<dbReference type="GO" id="GO:0046872">
    <property type="term" value="F:metal ion binding"/>
    <property type="evidence" value="ECO:0007669"/>
    <property type="project" value="UniProtKB-KW"/>
</dbReference>
<dbReference type="Gene3D" id="3.10.120.10">
    <property type="entry name" value="Cytochrome b5-like heme/steroid binding domain"/>
    <property type="match status" value="1"/>
</dbReference>
<dbReference type="InterPro" id="IPR001199">
    <property type="entry name" value="Cyt_B5-like_heme/steroid-bd"/>
</dbReference>
<dbReference type="InterPro" id="IPR036400">
    <property type="entry name" value="Cyt_B5-like_heme/steroid_sf"/>
</dbReference>
<dbReference type="InterPro" id="IPR018506">
    <property type="entry name" value="Cyt_B5_heme-BS"/>
</dbReference>
<dbReference type="InterPro" id="IPR050668">
    <property type="entry name" value="Cytochrome_b5"/>
</dbReference>
<dbReference type="PANTHER" id="PTHR19359">
    <property type="entry name" value="CYTOCHROME B5"/>
    <property type="match status" value="1"/>
</dbReference>
<dbReference type="Pfam" id="PF00173">
    <property type="entry name" value="Cyt-b5"/>
    <property type="match status" value="1"/>
</dbReference>
<dbReference type="PRINTS" id="PR00363">
    <property type="entry name" value="CYTOCHROMEB5"/>
</dbReference>
<dbReference type="SMART" id="SM01117">
    <property type="entry name" value="Cyt-b5"/>
    <property type="match status" value="1"/>
</dbReference>
<dbReference type="SUPFAM" id="SSF55856">
    <property type="entry name" value="Cytochrome b5-like heme/steroid binding domain"/>
    <property type="match status" value="1"/>
</dbReference>
<dbReference type="PROSITE" id="PS00191">
    <property type="entry name" value="CYTOCHROME_B5_1"/>
    <property type="match status" value="1"/>
</dbReference>
<dbReference type="PROSITE" id="PS50255">
    <property type="entry name" value="CYTOCHROME_B5_2"/>
    <property type="match status" value="1"/>
</dbReference>
<gene>
    <name type="ordered locus">MIMI_L628</name>
</gene>
<sequence>MTYNYLLILIIIYVIKIICRYFKQKNELQMESKTNLDSSKLVDPINQVNQINQVNQVNQTNQTDKIIVSFRGDKYDITDFLRKHPGGKNILIKNNGKDIEELMAEYEHSKNAYLILSKYKITEK</sequence>
<proteinExistence type="inferred from homology"/>
<evidence type="ECO:0000250" key="1"/>
<evidence type="ECO:0000255" key="2"/>
<evidence type="ECO:0000255" key="3">
    <source>
        <dbReference type="PROSITE-ProRule" id="PRU00279"/>
    </source>
</evidence>
<evidence type="ECO:0000305" key="4"/>
<reference key="1">
    <citation type="journal article" date="2004" name="Science">
        <title>The 1.2-megabase genome sequence of Mimivirus.</title>
        <authorList>
            <person name="Raoult D."/>
            <person name="Audic S."/>
            <person name="Robert C."/>
            <person name="Abergel C."/>
            <person name="Renesto P."/>
            <person name="Ogata H."/>
            <person name="La Scola B."/>
            <person name="Susan M."/>
            <person name="Claverie J.-M."/>
        </authorList>
    </citation>
    <scope>NUCLEOTIDE SEQUENCE [LARGE SCALE GENOMIC DNA]</scope>
    <source>
        <strain>Rowbotham-Bradford</strain>
    </source>
</reference>
<organismHost>
    <name type="scientific">Acanthamoeba polyphaga</name>
    <name type="common">Amoeba</name>
    <dbReference type="NCBI Taxonomy" id="5757"/>
</organismHost>
<feature type="chain" id="PRO_0000166036" description="Cytochrome b5-like protein">
    <location>
        <begin position="1"/>
        <end position="124"/>
    </location>
</feature>
<feature type="transmembrane region" description="Helical" evidence="2">
    <location>
        <begin position="5"/>
        <end position="22"/>
    </location>
</feature>
<feature type="domain" description="Cytochrome b5 heme-binding" evidence="3">
    <location>
        <begin position="49"/>
        <end position="124"/>
    </location>
</feature>
<feature type="binding site" description="axial binding residue" evidence="3">
    <location>
        <position position="84"/>
    </location>
    <ligand>
        <name>heme</name>
        <dbReference type="ChEBI" id="CHEBI:30413"/>
    </ligand>
    <ligandPart>
        <name>Fe</name>
        <dbReference type="ChEBI" id="CHEBI:18248"/>
    </ligandPart>
</feature>
<feature type="binding site" description="axial binding residue" evidence="3">
    <location>
        <position position="108"/>
    </location>
    <ligand>
        <name>heme</name>
        <dbReference type="ChEBI" id="CHEBI:30413"/>
    </ligand>
    <ligandPart>
        <name>Fe</name>
        <dbReference type="ChEBI" id="CHEBI:18248"/>
    </ligandPart>
</feature>
<accession>Q5UR80</accession>
<organism>
    <name type="scientific">Acanthamoeba polyphaga mimivirus</name>
    <name type="common">APMV</name>
    <dbReference type="NCBI Taxonomy" id="212035"/>
    <lineage>
        <taxon>Viruses</taxon>
        <taxon>Varidnaviria</taxon>
        <taxon>Bamfordvirae</taxon>
        <taxon>Nucleocytoviricota</taxon>
        <taxon>Megaviricetes</taxon>
        <taxon>Imitervirales</taxon>
        <taxon>Mimiviridae</taxon>
        <taxon>Megamimivirinae</taxon>
        <taxon>Mimivirus</taxon>
        <taxon>Mimivirus bradfordmassiliense</taxon>
    </lineage>
</organism>